<proteinExistence type="inferred from homology"/>
<gene>
    <name evidence="1" type="primary">rnfE</name>
    <name type="ordered locus">CGSHiGG_02180</name>
</gene>
<comment type="function">
    <text evidence="1">Part of a membrane-bound complex that couples electron transfer with translocation of ions across the membrane.</text>
</comment>
<comment type="subunit">
    <text evidence="1">The complex is composed of six subunits: RnfA, RnfB, RnfC, RnfD, RnfE and RnfG.</text>
</comment>
<comment type="subcellular location">
    <subcellularLocation>
        <location evidence="1">Cell inner membrane</location>
        <topology evidence="1">Multi-pass membrane protein</topology>
    </subcellularLocation>
</comment>
<comment type="similarity">
    <text evidence="1">Belongs to the NqrDE/RnfAE family.</text>
</comment>
<name>RNFE_HAEIG</name>
<organism>
    <name type="scientific">Haemophilus influenzae (strain PittGG)</name>
    <dbReference type="NCBI Taxonomy" id="374931"/>
    <lineage>
        <taxon>Bacteria</taxon>
        <taxon>Pseudomonadati</taxon>
        <taxon>Pseudomonadota</taxon>
        <taxon>Gammaproteobacteria</taxon>
        <taxon>Pasteurellales</taxon>
        <taxon>Pasteurellaceae</taxon>
        <taxon>Haemophilus</taxon>
    </lineage>
</organism>
<reference key="1">
    <citation type="journal article" date="2007" name="Genome Biol.">
        <title>Characterization and modeling of the Haemophilus influenzae core and supragenomes based on the complete genomic sequences of Rd and 12 clinical nontypeable strains.</title>
        <authorList>
            <person name="Hogg J.S."/>
            <person name="Hu F.Z."/>
            <person name="Janto B."/>
            <person name="Boissy R."/>
            <person name="Hayes J."/>
            <person name="Keefe R."/>
            <person name="Post J.C."/>
            <person name="Ehrlich G.D."/>
        </authorList>
    </citation>
    <scope>NUCLEOTIDE SEQUENCE [LARGE SCALE GENOMIC DNA]</scope>
    <source>
        <strain>PittGG</strain>
    </source>
</reference>
<sequence>MTDLTEKNTALEEKIESAVENQQKSIWKEIFAQGIWKNNPAVVQLLGLCPLLAVSSTATNALGLGLATMLVLTCTNTVISLFRQYIPKEIRIPIYVMIIATTVTAVQLLMNAYTYTLYQSLGIFIPLIVTNCIIIGRAEAFASKNSLLHSIWDGFSMGLGMALSLTILGALREIIGQGTIFEGIENLFGEQAKFLTHHIYHTDSSFLLFILPPGAFIGLGLLLAIKNRIDNIKK</sequence>
<protein>
    <recommendedName>
        <fullName evidence="1">Ion-translocating oxidoreductase complex subunit E</fullName>
        <ecNumber evidence="1">7.-.-.-</ecNumber>
    </recommendedName>
    <alternativeName>
        <fullName evidence="1">Rnf electron transport complex subunit E</fullName>
    </alternativeName>
</protein>
<feature type="chain" id="PRO_1000014093" description="Ion-translocating oxidoreductase complex subunit E">
    <location>
        <begin position="1"/>
        <end position="234"/>
    </location>
</feature>
<feature type="transmembrane region" description="Helical" evidence="1">
    <location>
        <begin position="62"/>
        <end position="82"/>
    </location>
</feature>
<feature type="transmembrane region" description="Helical" evidence="1">
    <location>
        <begin position="92"/>
        <end position="112"/>
    </location>
</feature>
<feature type="transmembrane region" description="Helical" evidence="1">
    <location>
        <begin position="116"/>
        <end position="136"/>
    </location>
</feature>
<feature type="transmembrane region" description="Helical" evidence="1">
    <location>
        <begin position="151"/>
        <end position="171"/>
    </location>
</feature>
<feature type="transmembrane region" description="Helical" evidence="1">
    <location>
        <begin position="205"/>
        <end position="225"/>
    </location>
</feature>
<accession>A5UFC5</accession>
<dbReference type="EC" id="7.-.-.-" evidence="1"/>
<dbReference type="EMBL" id="CP000672">
    <property type="protein sequence ID" value="ABQ99480.1"/>
    <property type="molecule type" value="Genomic_DNA"/>
</dbReference>
<dbReference type="SMR" id="A5UFC5"/>
<dbReference type="KEGG" id="hiq:CGSHiGG_02180"/>
<dbReference type="HOGENOM" id="CLU_046659_1_0_6"/>
<dbReference type="Proteomes" id="UP000001990">
    <property type="component" value="Chromosome"/>
</dbReference>
<dbReference type="GO" id="GO:0005886">
    <property type="term" value="C:plasma membrane"/>
    <property type="evidence" value="ECO:0007669"/>
    <property type="project" value="UniProtKB-SubCell"/>
</dbReference>
<dbReference type="GO" id="GO:0022900">
    <property type="term" value="P:electron transport chain"/>
    <property type="evidence" value="ECO:0007669"/>
    <property type="project" value="UniProtKB-UniRule"/>
</dbReference>
<dbReference type="HAMAP" id="MF_00478">
    <property type="entry name" value="RsxE_RnfE"/>
    <property type="match status" value="1"/>
</dbReference>
<dbReference type="InterPro" id="IPR003667">
    <property type="entry name" value="NqrDE/RnfAE"/>
</dbReference>
<dbReference type="InterPro" id="IPR010968">
    <property type="entry name" value="RnfE"/>
</dbReference>
<dbReference type="NCBIfam" id="NF009070">
    <property type="entry name" value="PRK12405.1"/>
    <property type="match status" value="1"/>
</dbReference>
<dbReference type="NCBIfam" id="TIGR01948">
    <property type="entry name" value="rnfE"/>
    <property type="match status" value="1"/>
</dbReference>
<dbReference type="PANTHER" id="PTHR30586">
    <property type="entry name" value="ELECTRON TRANSPORT COMPLEX PROTEIN RNFE"/>
    <property type="match status" value="1"/>
</dbReference>
<dbReference type="PANTHER" id="PTHR30586:SF0">
    <property type="entry name" value="ION-TRANSLOCATING OXIDOREDUCTASE COMPLEX SUBUNIT E"/>
    <property type="match status" value="1"/>
</dbReference>
<dbReference type="Pfam" id="PF02508">
    <property type="entry name" value="Rnf-Nqr"/>
    <property type="match status" value="1"/>
</dbReference>
<dbReference type="PIRSF" id="PIRSF006102">
    <property type="entry name" value="NQR_DE"/>
    <property type="match status" value="1"/>
</dbReference>
<keyword id="KW-0997">Cell inner membrane</keyword>
<keyword id="KW-1003">Cell membrane</keyword>
<keyword id="KW-0249">Electron transport</keyword>
<keyword id="KW-0472">Membrane</keyword>
<keyword id="KW-1278">Translocase</keyword>
<keyword id="KW-0812">Transmembrane</keyword>
<keyword id="KW-1133">Transmembrane helix</keyword>
<keyword id="KW-0813">Transport</keyword>
<evidence type="ECO:0000255" key="1">
    <source>
        <dbReference type="HAMAP-Rule" id="MF_00478"/>
    </source>
</evidence>